<dbReference type="EMBL" id="AP009339">
    <property type="protein sequence ID" value="BAF64958.1"/>
    <property type="molecule type" value="Genomic_DNA"/>
</dbReference>
<dbReference type="RefSeq" id="YP_001312217.1">
    <property type="nucleotide sequence ID" value="NC_009618.1"/>
</dbReference>
<dbReference type="SMR" id="A6H5J2"/>
<dbReference type="GeneID" id="5309568"/>
<dbReference type="GO" id="GO:0009535">
    <property type="term" value="C:chloroplast thylakoid membrane"/>
    <property type="evidence" value="ECO:0007669"/>
    <property type="project" value="UniProtKB-SubCell"/>
</dbReference>
<dbReference type="GO" id="GO:0009539">
    <property type="term" value="C:photosystem II reaction center"/>
    <property type="evidence" value="ECO:0007669"/>
    <property type="project" value="InterPro"/>
</dbReference>
<dbReference type="GO" id="GO:0015979">
    <property type="term" value="P:photosynthesis"/>
    <property type="evidence" value="ECO:0007669"/>
    <property type="project" value="UniProtKB-UniRule"/>
</dbReference>
<dbReference type="Gene3D" id="6.10.250.2070">
    <property type="match status" value="1"/>
</dbReference>
<dbReference type="HAMAP" id="MF_01305">
    <property type="entry name" value="PSII_PsbJ"/>
    <property type="match status" value="1"/>
</dbReference>
<dbReference type="InterPro" id="IPR002682">
    <property type="entry name" value="PSII_PsbJ"/>
</dbReference>
<dbReference type="InterPro" id="IPR037267">
    <property type="entry name" value="PSII_PsbJ_sf"/>
</dbReference>
<dbReference type="NCBIfam" id="NF002722">
    <property type="entry name" value="PRK02565.1"/>
    <property type="match status" value="1"/>
</dbReference>
<dbReference type="PANTHER" id="PTHR34812">
    <property type="entry name" value="PHOTOSYSTEM II REACTION CENTER PROTEIN J"/>
    <property type="match status" value="1"/>
</dbReference>
<dbReference type="PANTHER" id="PTHR34812:SF3">
    <property type="entry name" value="PHOTOSYSTEM II REACTION CENTER PROTEIN J"/>
    <property type="match status" value="1"/>
</dbReference>
<dbReference type="Pfam" id="PF01788">
    <property type="entry name" value="PsbJ"/>
    <property type="match status" value="1"/>
</dbReference>
<dbReference type="SUPFAM" id="SSF161021">
    <property type="entry name" value="Photosystem II reaction center protein J, PsbJ"/>
    <property type="match status" value="1"/>
</dbReference>
<proteinExistence type="inferred from homology"/>
<accession>A6H5J2</accession>
<organism>
    <name type="scientific">Cycas taitungensis</name>
    <name type="common">Prince sago</name>
    <name type="synonym">Cycas taiwaniana</name>
    <dbReference type="NCBI Taxonomy" id="54799"/>
    <lineage>
        <taxon>Eukaryota</taxon>
        <taxon>Viridiplantae</taxon>
        <taxon>Streptophyta</taxon>
        <taxon>Embryophyta</taxon>
        <taxon>Tracheophyta</taxon>
        <taxon>Spermatophyta</taxon>
        <taxon>Cycadidae</taxon>
        <taxon>Cycadales</taxon>
        <taxon>Cycadaceae</taxon>
        <taxon>Cycas</taxon>
    </lineage>
</organism>
<evidence type="ECO:0000255" key="1">
    <source>
        <dbReference type="HAMAP-Rule" id="MF_01305"/>
    </source>
</evidence>
<keyword id="KW-0150">Chloroplast</keyword>
<keyword id="KW-0472">Membrane</keyword>
<keyword id="KW-0602">Photosynthesis</keyword>
<keyword id="KW-0604">Photosystem II</keyword>
<keyword id="KW-0934">Plastid</keyword>
<keyword id="KW-0674">Reaction center</keyword>
<keyword id="KW-0793">Thylakoid</keyword>
<keyword id="KW-0812">Transmembrane</keyword>
<keyword id="KW-1133">Transmembrane helix</keyword>
<gene>
    <name evidence="1" type="primary">psbJ</name>
</gene>
<comment type="function">
    <text evidence="1">One of the components of the core complex of photosystem II (PSII). PSII is a light-driven water:plastoquinone oxidoreductase that uses light energy to abstract electrons from H(2)O, generating O(2) and a proton gradient subsequently used for ATP formation. It consists of a core antenna complex that captures photons, and an electron transfer chain that converts photonic excitation into a charge separation.</text>
</comment>
<comment type="subunit">
    <text evidence="1">PSII is composed of 1 copy each of membrane proteins PsbA, PsbB, PsbC, PsbD, PsbE, PsbF, PsbH, PsbI, PsbJ, PsbK, PsbL, PsbM, PsbT, PsbX, PsbY, PsbZ, Psb30/Ycf12, at least 3 peripheral proteins of the oxygen-evolving complex and a large number of cofactors. It forms dimeric complexes.</text>
</comment>
<comment type="subcellular location">
    <subcellularLocation>
        <location evidence="1">Plastid</location>
        <location evidence="1">Chloroplast thylakoid membrane</location>
        <topology evidence="1">Single-pass membrane protein</topology>
    </subcellularLocation>
</comment>
<comment type="similarity">
    <text evidence="1">Belongs to the PsbJ family.</text>
</comment>
<protein>
    <recommendedName>
        <fullName evidence="1">Photosystem II reaction center protein J</fullName>
        <shortName evidence="1">PSII-J</shortName>
    </recommendedName>
</protein>
<reference key="1">
    <citation type="journal article" date="2007" name="Mol. Biol. Evol.">
        <title>Chloroplast genome (cpDNA) of Cycas taitungensis and 56 cp protein-coding genes of Gnetum parvifolium: insights into cpDNA evolution and phylogeny of extant seed plants.</title>
        <authorList>
            <person name="Wu C.-S."/>
            <person name="Wang Y.-N."/>
            <person name="Liu S.-M."/>
            <person name="Chaw S.-M."/>
        </authorList>
    </citation>
    <scope>NUCLEOTIDE SEQUENCE [LARGE SCALE GENOMIC DNA]</scope>
</reference>
<geneLocation type="chloroplast"/>
<feature type="chain" id="PRO_0000322057" description="Photosystem II reaction center protein J">
    <location>
        <begin position="1"/>
        <end position="40"/>
    </location>
</feature>
<feature type="transmembrane region" description="Helical" evidence="1">
    <location>
        <begin position="8"/>
        <end position="28"/>
    </location>
</feature>
<name>PSBJ_CYCTA</name>
<sequence>MADTTGRIPLWLIGTVTGTLVIGLIGIFFYGSYSGLGSSL</sequence>